<reference key="1">
    <citation type="journal article" date="2007" name="DNA Res.">
        <title>Complete genomic structure of the bloom-forming toxic cyanobacterium Microcystis aeruginosa NIES-843.</title>
        <authorList>
            <person name="Kaneko T."/>
            <person name="Nakajima N."/>
            <person name="Okamoto S."/>
            <person name="Suzuki I."/>
            <person name="Tanabe Y."/>
            <person name="Tamaoki M."/>
            <person name="Nakamura Y."/>
            <person name="Kasai F."/>
            <person name="Watanabe A."/>
            <person name="Kawashima K."/>
            <person name="Kishida Y."/>
            <person name="Ono A."/>
            <person name="Shimizu Y."/>
            <person name="Takahashi C."/>
            <person name="Minami C."/>
            <person name="Fujishiro T."/>
            <person name="Kohara M."/>
            <person name="Katoh M."/>
            <person name="Nakazaki N."/>
            <person name="Nakayama S."/>
            <person name="Yamada M."/>
            <person name="Tabata S."/>
            <person name="Watanabe M.M."/>
        </authorList>
    </citation>
    <scope>NUCLEOTIDE SEQUENCE [LARGE SCALE GENOMIC DNA]</scope>
    <source>
        <strain>NIES-843 / IAM M-247</strain>
    </source>
</reference>
<protein>
    <recommendedName>
        <fullName evidence="1">Photosystem II reaction center protein M</fullName>
        <shortName evidence="1">PSII-M</shortName>
    </recommendedName>
</protein>
<keyword id="KW-0472">Membrane</keyword>
<keyword id="KW-0602">Photosynthesis</keyword>
<keyword id="KW-0604">Photosystem II</keyword>
<keyword id="KW-0674">Reaction center</keyword>
<keyword id="KW-0793">Thylakoid</keyword>
<keyword id="KW-0812">Transmembrane</keyword>
<keyword id="KW-1133">Transmembrane helix</keyword>
<gene>
    <name evidence="1" type="primary">psbM</name>
    <name type="ordered locus">MAE_53260</name>
</gene>
<evidence type="ECO:0000255" key="1">
    <source>
        <dbReference type="HAMAP-Rule" id="MF_00438"/>
    </source>
</evidence>
<sequence>MQVNNLGFIASILFVLVPTVFLLILFIQTRQETEG</sequence>
<dbReference type="EMBL" id="AP009552">
    <property type="protein sequence ID" value="BAG05148.1"/>
    <property type="molecule type" value="Genomic_DNA"/>
</dbReference>
<dbReference type="SMR" id="B0JYB0"/>
<dbReference type="STRING" id="449447.MAE_53260"/>
<dbReference type="PaxDb" id="449447-MAE_53260"/>
<dbReference type="EnsemblBacteria" id="BAG05148">
    <property type="protein sequence ID" value="BAG05148"/>
    <property type="gene ID" value="MAE_53260"/>
</dbReference>
<dbReference type="KEGG" id="mar:MAE_53260"/>
<dbReference type="HOGENOM" id="CLU_215415_0_0_3"/>
<dbReference type="BioCyc" id="MAER449447:MAE_RS30840-MONOMER"/>
<dbReference type="Proteomes" id="UP000001510">
    <property type="component" value="Chromosome"/>
</dbReference>
<dbReference type="GO" id="GO:0009523">
    <property type="term" value="C:photosystem II"/>
    <property type="evidence" value="ECO:0007669"/>
    <property type="project" value="UniProtKB-KW"/>
</dbReference>
<dbReference type="GO" id="GO:0031676">
    <property type="term" value="C:plasma membrane-derived thylakoid membrane"/>
    <property type="evidence" value="ECO:0007669"/>
    <property type="project" value="UniProtKB-SubCell"/>
</dbReference>
<dbReference type="GO" id="GO:0019684">
    <property type="term" value="P:photosynthesis, light reaction"/>
    <property type="evidence" value="ECO:0007669"/>
    <property type="project" value="InterPro"/>
</dbReference>
<dbReference type="HAMAP" id="MF_00438">
    <property type="entry name" value="PSII_PsbM"/>
    <property type="match status" value="1"/>
</dbReference>
<dbReference type="InterPro" id="IPR007826">
    <property type="entry name" value="PSII_PsbM"/>
</dbReference>
<dbReference type="InterPro" id="IPR037269">
    <property type="entry name" value="PSII_PsbM_sf"/>
</dbReference>
<dbReference type="NCBIfam" id="TIGR03038">
    <property type="entry name" value="PS_II_psbM"/>
    <property type="match status" value="1"/>
</dbReference>
<dbReference type="Pfam" id="PF05151">
    <property type="entry name" value="PsbM"/>
    <property type="match status" value="1"/>
</dbReference>
<dbReference type="SUPFAM" id="SSF161033">
    <property type="entry name" value="Photosystem II reaction center protein M, PsbM"/>
    <property type="match status" value="1"/>
</dbReference>
<proteinExistence type="inferred from homology"/>
<name>PSBM_MICAN</name>
<organism>
    <name type="scientific">Microcystis aeruginosa (strain NIES-843 / IAM M-2473)</name>
    <dbReference type="NCBI Taxonomy" id="449447"/>
    <lineage>
        <taxon>Bacteria</taxon>
        <taxon>Bacillati</taxon>
        <taxon>Cyanobacteriota</taxon>
        <taxon>Cyanophyceae</taxon>
        <taxon>Oscillatoriophycideae</taxon>
        <taxon>Chroococcales</taxon>
        <taxon>Microcystaceae</taxon>
        <taxon>Microcystis</taxon>
    </lineage>
</organism>
<accession>B0JYB0</accession>
<comment type="function">
    <text evidence="1">One of the components of the core complex of photosystem II (PSII). PSII is a light-driven water:plastoquinone oxidoreductase that uses light energy to abstract electrons from H(2)O, generating O(2) and a proton gradient subsequently used for ATP formation. It consists of a core antenna complex that captures photons, and an electron transfer chain that converts photonic excitation into a charge separation. This subunit is found at the monomer-monomer interface.</text>
</comment>
<comment type="subunit">
    <text evidence="1">PSII is composed of 1 copy each of membrane proteins PsbA, PsbB, PsbC, PsbD, PsbE, PsbF, PsbH, PsbI, PsbJ, PsbK, PsbL, PsbM, PsbT, PsbX, PsbY, PsbZ, Psb30/Ycf12, peripheral proteins PsbO, CyanoQ (PsbQ), PsbU, PsbV and a large number of cofactors. It forms dimeric complexes.</text>
</comment>
<comment type="subcellular location">
    <subcellularLocation>
        <location evidence="1">Cellular thylakoid membrane</location>
        <topology evidence="1">Single-pass membrane protein</topology>
    </subcellularLocation>
</comment>
<comment type="similarity">
    <text evidence="1">Belongs to the PsbM family.</text>
</comment>
<feature type="chain" id="PRO_1000080694" description="Photosystem II reaction center protein M">
    <location>
        <begin position="1"/>
        <end position="35"/>
    </location>
</feature>
<feature type="transmembrane region" description="Helical" evidence="1">
    <location>
        <begin position="7"/>
        <end position="27"/>
    </location>
</feature>